<keyword id="KW-0997">Cell inner membrane</keyword>
<keyword id="KW-1003">Cell membrane</keyword>
<keyword id="KW-0472">Membrane</keyword>
<keyword id="KW-1185">Reference proteome</keyword>
<keyword id="KW-0812">Transmembrane</keyword>
<keyword id="KW-1133">Transmembrane helix</keyword>
<keyword id="KW-0813">Transport</keyword>
<feature type="chain" id="PRO_1000062771" description="Vitamin B12 import system permease protein BtuC">
    <location>
        <begin position="1"/>
        <end position="326"/>
    </location>
</feature>
<feature type="transmembrane region" description="Helical" evidence="1">
    <location>
        <begin position="15"/>
        <end position="35"/>
    </location>
</feature>
<feature type="transmembrane region" description="Helical" evidence="1">
    <location>
        <begin position="61"/>
        <end position="81"/>
    </location>
</feature>
<feature type="transmembrane region" description="Helical" evidence="1">
    <location>
        <begin position="88"/>
        <end position="108"/>
    </location>
</feature>
<feature type="transmembrane region" description="Helical" evidence="1">
    <location>
        <begin position="112"/>
        <end position="132"/>
    </location>
</feature>
<feature type="transmembrane region" description="Helical" evidence="1">
    <location>
        <begin position="146"/>
        <end position="166"/>
    </location>
</feature>
<feature type="transmembrane region" description="Helical" evidence="1">
    <location>
        <begin position="184"/>
        <end position="204"/>
    </location>
</feature>
<feature type="transmembrane region" description="Helical" evidence="1">
    <location>
        <begin position="240"/>
        <end position="260"/>
    </location>
</feature>
<feature type="transmembrane region" description="Helical" evidence="1">
    <location>
        <begin position="274"/>
        <end position="294"/>
    </location>
</feature>
<feature type="transmembrane region" description="Helical" evidence="1">
    <location>
        <begin position="302"/>
        <end position="322"/>
    </location>
</feature>
<sequence>MLTLARQQQRQNIRWLLCLSVLMLLALLLSLCAGEQWISPGDWFSPRGELFVWQIRLPRTLAVLLVGAALAISGAVMQALFENPLAEPGLLGVSNGAGVGLIAAVLLGQGQLPNWALGLCAIAGALIITLILLRFARRHLSTSRLLLAGVALGIICSALMTWAIYFSTSVDLRQLMYWMMGGFGGVDWRQSWLMLALIPVLLWICCQSRPMNMLALGEISARQLGLPLWFWRNVLVAATGWMVGVSVALAGAIGFIGLVIPHILRLCGLTDHRVLLPGCALAGASALLLADVVARLALAAAELPIGVVTATLGAPVFIWLLLKAGR</sequence>
<name>BTUC_ECO24</name>
<proteinExistence type="inferred from homology"/>
<dbReference type="EMBL" id="CP000800">
    <property type="protein sequence ID" value="ABV20008.1"/>
    <property type="molecule type" value="Genomic_DNA"/>
</dbReference>
<dbReference type="RefSeq" id="WP_000956519.1">
    <property type="nucleotide sequence ID" value="NC_009801.1"/>
</dbReference>
<dbReference type="SMR" id="A7ZMH9"/>
<dbReference type="KEGG" id="ecw:EcE24377A_1930"/>
<dbReference type="HOGENOM" id="CLU_013016_0_3_6"/>
<dbReference type="Proteomes" id="UP000001122">
    <property type="component" value="Chromosome"/>
</dbReference>
<dbReference type="GO" id="GO:0005886">
    <property type="term" value="C:plasma membrane"/>
    <property type="evidence" value="ECO:0007669"/>
    <property type="project" value="UniProtKB-SubCell"/>
</dbReference>
<dbReference type="GO" id="GO:0090482">
    <property type="term" value="F:vitamin transmembrane transporter activity"/>
    <property type="evidence" value="ECO:0007669"/>
    <property type="project" value="UniProtKB-UniRule"/>
</dbReference>
<dbReference type="GO" id="GO:0015889">
    <property type="term" value="P:cobalamin transport"/>
    <property type="evidence" value="ECO:0007669"/>
    <property type="project" value="UniProtKB-UniRule"/>
</dbReference>
<dbReference type="CDD" id="cd06550">
    <property type="entry name" value="TM_ABC_iron-siderophores_like"/>
    <property type="match status" value="1"/>
</dbReference>
<dbReference type="FunFam" id="1.10.3470.10:FF:000001">
    <property type="entry name" value="Vitamin B12 ABC transporter permease BtuC"/>
    <property type="match status" value="1"/>
</dbReference>
<dbReference type="Gene3D" id="1.10.3470.10">
    <property type="entry name" value="ABC transporter involved in vitamin B12 uptake, BtuC"/>
    <property type="match status" value="1"/>
</dbReference>
<dbReference type="HAMAP" id="MF_01004">
    <property type="entry name" value="BtuC"/>
    <property type="match status" value="1"/>
</dbReference>
<dbReference type="InterPro" id="IPR037294">
    <property type="entry name" value="ABC_BtuC-like"/>
</dbReference>
<dbReference type="InterPro" id="IPR023691">
    <property type="entry name" value="ABC_transptr_BtuC"/>
</dbReference>
<dbReference type="InterPro" id="IPR000522">
    <property type="entry name" value="ABC_transptr_permease_BtuC"/>
</dbReference>
<dbReference type="NCBIfam" id="NF003001">
    <property type="entry name" value="PRK03784.1"/>
    <property type="match status" value="1"/>
</dbReference>
<dbReference type="PANTHER" id="PTHR30472">
    <property type="entry name" value="FERRIC ENTEROBACTIN TRANSPORT SYSTEM PERMEASE PROTEIN"/>
    <property type="match status" value="1"/>
</dbReference>
<dbReference type="PANTHER" id="PTHR30472:SF29">
    <property type="entry name" value="VITAMIN B12 IMPORT SYSTEM PERMEASE PROTEIN BTUC"/>
    <property type="match status" value="1"/>
</dbReference>
<dbReference type="Pfam" id="PF01032">
    <property type="entry name" value="FecCD"/>
    <property type="match status" value="1"/>
</dbReference>
<dbReference type="SUPFAM" id="SSF81345">
    <property type="entry name" value="ABC transporter involved in vitamin B12 uptake, BtuC"/>
    <property type="match status" value="1"/>
</dbReference>
<gene>
    <name evidence="1" type="primary">btuC</name>
    <name type="ordered locus">EcE24377A_1930</name>
</gene>
<reference key="1">
    <citation type="journal article" date="2008" name="J. Bacteriol.">
        <title>The pangenome structure of Escherichia coli: comparative genomic analysis of E. coli commensal and pathogenic isolates.</title>
        <authorList>
            <person name="Rasko D.A."/>
            <person name="Rosovitz M.J."/>
            <person name="Myers G.S.A."/>
            <person name="Mongodin E.F."/>
            <person name="Fricke W.F."/>
            <person name="Gajer P."/>
            <person name="Crabtree J."/>
            <person name="Sebaihia M."/>
            <person name="Thomson N.R."/>
            <person name="Chaudhuri R."/>
            <person name="Henderson I.R."/>
            <person name="Sperandio V."/>
            <person name="Ravel J."/>
        </authorList>
    </citation>
    <scope>NUCLEOTIDE SEQUENCE [LARGE SCALE GENOMIC DNA]</scope>
    <source>
        <strain>E24377A / ETEC</strain>
    </source>
</reference>
<accession>A7ZMH9</accession>
<evidence type="ECO:0000255" key="1">
    <source>
        <dbReference type="HAMAP-Rule" id="MF_01004"/>
    </source>
</evidence>
<comment type="function">
    <text evidence="1">Part of the ABC transporter complex BtuCDF involved in vitamin B12 import. Involved in the translocation of the substrate across the membrane.</text>
</comment>
<comment type="subunit">
    <text evidence="1">The complex is composed of two ATP-binding proteins (BtuD), two transmembrane proteins (BtuC) and a solute-binding protein (BtuF).</text>
</comment>
<comment type="subcellular location">
    <subcellularLocation>
        <location evidence="1">Cell inner membrane</location>
        <topology evidence="1">Multi-pass membrane protein</topology>
    </subcellularLocation>
</comment>
<comment type="similarity">
    <text evidence="1">Belongs to the binding-protein-dependent transport system permease family. FecCD subfamily.</text>
</comment>
<protein>
    <recommendedName>
        <fullName evidence="1">Vitamin B12 import system permease protein BtuC</fullName>
    </recommendedName>
</protein>
<organism>
    <name type="scientific">Escherichia coli O139:H28 (strain E24377A / ETEC)</name>
    <dbReference type="NCBI Taxonomy" id="331111"/>
    <lineage>
        <taxon>Bacteria</taxon>
        <taxon>Pseudomonadati</taxon>
        <taxon>Pseudomonadota</taxon>
        <taxon>Gammaproteobacteria</taxon>
        <taxon>Enterobacterales</taxon>
        <taxon>Enterobacteriaceae</taxon>
        <taxon>Escherichia</taxon>
    </lineage>
</organism>